<evidence type="ECO:0000250" key="1"/>
<evidence type="ECO:0000305" key="2"/>
<name>RPB1C_HUMAN</name>
<proteinExistence type="evidence at protein level"/>
<accession>Q9H1A7</accession>
<accession>A6NKA1</accession>
<sequence length="115" mass="13074">MNAPPAFESFLLFEGEKITINKDTKVPNACLFTINKEDHTLGNIIKSQLLKDPQVLFAGYKVPHPLEHKIIIRVQTTPDYSPQEAFTNAITDLISELSLLEERFRTCLLPLRLLP</sequence>
<reference key="1">
    <citation type="journal article" date="2001" name="BMC Mol. Biol.">
        <title>A human RNA polymerase II subunit is encoded by a recently generated multigene family.</title>
        <authorList>
            <person name="Grandemange S."/>
            <person name="Schaller S."/>
            <person name="Yamano S."/>
            <person name="Du Manoir S."/>
            <person name="Shpakovski G.V."/>
            <person name="Mattei M.-G."/>
            <person name="Kedinger C."/>
            <person name="Vigneron M."/>
        </authorList>
    </citation>
    <scope>NUCLEOTIDE SEQUENCE [MRNA]</scope>
    <source>
        <tissue>Cervix carcinoma</tissue>
    </source>
</reference>
<reference key="2">
    <citation type="journal article" date="2003" name="Nature">
        <title>The DNA sequence of human chromosome 7.</title>
        <authorList>
            <person name="Hillier L.W."/>
            <person name="Fulton R.S."/>
            <person name="Fulton L.A."/>
            <person name="Graves T.A."/>
            <person name="Pepin K.H."/>
            <person name="Wagner-McPherson C."/>
            <person name="Layman D."/>
            <person name="Maas J."/>
            <person name="Jaeger S."/>
            <person name="Walker R."/>
            <person name="Wylie K."/>
            <person name="Sekhon M."/>
            <person name="Becker M.C."/>
            <person name="O'Laughlin M.D."/>
            <person name="Schaller M.E."/>
            <person name="Fewell G.A."/>
            <person name="Delehaunty K.D."/>
            <person name="Miner T.L."/>
            <person name="Nash W.E."/>
            <person name="Cordes M."/>
            <person name="Du H."/>
            <person name="Sun H."/>
            <person name="Edwards J."/>
            <person name="Bradshaw-Cordum H."/>
            <person name="Ali J."/>
            <person name="Andrews S."/>
            <person name="Isak A."/>
            <person name="Vanbrunt A."/>
            <person name="Nguyen C."/>
            <person name="Du F."/>
            <person name="Lamar B."/>
            <person name="Courtney L."/>
            <person name="Kalicki J."/>
            <person name="Ozersky P."/>
            <person name="Bielicki L."/>
            <person name="Scott K."/>
            <person name="Holmes A."/>
            <person name="Harkins R."/>
            <person name="Harris A."/>
            <person name="Strong C.M."/>
            <person name="Hou S."/>
            <person name="Tomlinson C."/>
            <person name="Dauphin-Kohlberg S."/>
            <person name="Kozlowicz-Reilly A."/>
            <person name="Leonard S."/>
            <person name="Rohlfing T."/>
            <person name="Rock S.M."/>
            <person name="Tin-Wollam A.-M."/>
            <person name="Abbott A."/>
            <person name="Minx P."/>
            <person name="Maupin R."/>
            <person name="Strowmatt C."/>
            <person name="Latreille P."/>
            <person name="Miller N."/>
            <person name="Johnson D."/>
            <person name="Murray J."/>
            <person name="Woessner J.P."/>
            <person name="Wendl M.C."/>
            <person name="Yang S.-P."/>
            <person name="Schultz B.R."/>
            <person name="Wallis J.W."/>
            <person name="Spieth J."/>
            <person name="Bieri T.A."/>
            <person name="Nelson J.O."/>
            <person name="Berkowicz N."/>
            <person name="Wohldmann P.E."/>
            <person name="Cook L.L."/>
            <person name="Hickenbotham M.T."/>
            <person name="Eldred J."/>
            <person name="Williams D."/>
            <person name="Bedell J.A."/>
            <person name="Mardis E.R."/>
            <person name="Clifton S.W."/>
            <person name="Chissoe S.L."/>
            <person name="Marra M.A."/>
            <person name="Raymond C."/>
            <person name="Haugen E."/>
            <person name="Gillett W."/>
            <person name="Zhou Y."/>
            <person name="James R."/>
            <person name="Phelps K."/>
            <person name="Iadanoto S."/>
            <person name="Bubb K."/>
            <person name="Simms E."/>
            <person name="Levy R."/>
            <person name="Clendenning J."/>
            <person name="Kaul R."/>
            <person name="Kent W.J."/>
            <person name="Furey T.S."/>
            <person name="Baertsch R.A."/>
            <person name="Brent M.R."/>
            <person name="Keibler E."/>
            <person name="Flicek P."/>
            <person name="Bork P."/>
            <person name="Suyama M."/>
            <person name="Bailey J.A."/>
            <person name="Portnoy M.E."/>
            <person name="Torrents D."/>
            <person name="Chinwalla A.T."/>
            <person name="Gish W.R."/>
            <person name="Eddy S.R."/>
            <person name="McPherson J.D."/>
            <person name="Olson M.V."/>
            <person name="Eichler E.E."/>
            <person name="Green E.D."/>
            <person name="Waterston R.H."/>
            <person name="Wilson R.K."/>
        </authorList>
    </citation>
    <scope>NUCLEOTIDE SEQUENCE [LARGE SCALE GENOMIC DNA]</scope>
</reference>
<gene>
    <name type="primary">POLR2J3</name>
</gene>
<organism>
    <name type="scientific">Homo sapiens</name>
    <name type="common">Human</name>
    <dbReference type="NCBI Taxonomy" id="9606"/>
    <lineage>
        <taxon>Eukaryota</taxon>
        <taxon>Metazoa</taxon>
        <taxon>Chordata</taxon>
        <taxon>Craniata</taxon>
        <taxon>Vertebrata</taxon>
        <taxon>Euteleostomi</taxon>
        <taxon>Mammalia</taxon>
        <taxon>Eutheria</taxon>
        <taxon>Euarchontoglires</taxon>
        <taxon>Primates</taxon>
        <taxon>Haplorrhini</taxon>
        <taxon>Catarrhini</taxon>
        <taxon>Hominidae</taxon>
        <taxon>Homo</taxon>
    </lineage>
</organism>
<keyword id="KW-0240">DNA-directed RNA polymerase</keyword>
<keyword id="KW-0539">Nucleus</keyword>
<keyword id="KW-1185">Reference proteome</keyword>
<keyword id="KW-0804">Transcription</keyword>
<comment type="function">
    <text evidence="1">DNA-dependent RNA polymerase catalyzes the transcription of DNA into RNA using the four ribonucleoside triphosphates as substrates. Component of RNA polymerase II which synthesizes mRNA precursors and many functional non-coding RNAs. Pol II is the central component of the basal RNA polymerase II transcription machinery. It is composed of mobile elements that move relative to each other. RPB11 is part of the core element with the central large cleft (By similarity).</text>
</comment>
<comment type="subunit">
    <text>Component of the RNA polymerase II (Pol II) complex consisting of 12 subunits.</text>
</comment>
<comment type="interaction">
    <interactant intactId="EBI-12818681">
        <id>Q9H1A7</id>
    </interactant>
    <interactant intactId="EBI-1166928">
        <id>Q8N5M1</id>
        <label>ATPAF2</label>
    </interactant>
    <organismsDiffer>false</organismsDiffer>
    <experiments>3</experiments>
</comment>
<comment type="interaction">
    <interactant intactId="EBI-12818681">
        <id>Q9H1A7</id>
    </interactant>
    <interactant intactId="EBI-1055079">
        <id>O15160</id>
        <label>POLR1C</label>
    </interactant>
    <organismsDiffer>false</organismsDiffer>
    <experiments>3</experiments>
</comment>
<comment type="interaction">
    <interactant intactId="EBI-12818681">
        <id>Q9H1A7</id>
    </interactant>
    <interactant intactId="EBI-8298169">
        <id>Q9UPW6</id>
        <label>SATB2</label>
    </interactant>
    <organismsDiffer>false</organismsDiffer>
    <experiments>3</experiments>
</comment>
<comment type="interaction">
    <interactant intactId="EBI-12818681">
        <id>Q9H1A7</id>
    </interactant>
    <interactant intactId="EBI-3650647">
        <id>Q9BUZ4</id>
        <label>TRAF4</label>
    </interactant>
    <organismsDiffer>false</organismsDiffer>
    <experiments>3</experiments>
</comment>
<comment type="interaction">
    <interactant intactId="EBI-12818681">
        <id>Q9H1A7</id>
    </interactant>
    <interactant intactId="EBI-9090990">
        <id>Q5W5X9-3</id>
        <label>TTC23</label>
    </interactant>
    <organismsDiffer>false</organismsDiffer>
    <experiments>3</experiments>
</comment>
<comment type="interaction">
    <interactant intactId="EBI-12818681">
        <id>Q9H1A7</id>
    </interactant>
    <interactant intactId="EBI-2559305">
        <id>A5D8V6</id>
        <label>VPS37C</label>
    </interactant>
    <organismsDiffer>false</organismsDiffer>
    <experiments>3</experiments>
</comment>
<comment type="subcellular location">
    <subcellularLocation>
        <location evidence="1">Nucleus</location>
    </subcellularLocation>
</comment>
<comment type="similarity">
    <text evidence="2">Belongs to the archaeal Rpo11/eukaryotic RPB11/RPC19 RNA polymerase subunit family.</text>
</comment>
<dbReference type="EMBL" id="AJ277741">
    <property type="protein sequence ID" value="CAC18331.1"/>
    <property type="molecule type" value="mRNA"/>
</dbReference>
<dbReference type="EMBL" id="AC093668">
    <property type="status" value="NOT_ANNOTATED_CDS"/>
    <property type="molecule type" value="Genomic_DNA"/>
</dbReference>
<dbReference type="CCDS" id="CCDS47673.1"/>
<dbReference type="RefSeq" id="NP_001091084.2">
    <property type="nucleotide sequence ID" value="NM_001097615.3"/>
</dbReference>
<dbReference type="RefSeq" id="XP_016867861.1">
    <property type="nucleotide sequence ID" value="XM_017012372.1"/>
</dbReference>
<dbReference type="RefSeq" id="XP_016867862.1">
    <property type="nucleotide sequence ID" value="XM_017012373.1"/>
</dbReference>
<dbReference type="SMR" id="Q9H1A7"/>
<dbReference type="FunCoup" id="Q9H1A7">
    <property type="interactions" value="183"/>
</dbReference>
<dbReference type="IntAct" id="Q9H1A7">
    <property type="interactions" value="7"/>
</dbReference>
<dbReference type="MINT" id="Q9H1A7"/>
<dbReference type="STRING" id="9606.ENSP00000483328"/>
<dbReference type="iPTMnet" id="Q9H1A7"/>
<dbReference type="PhosphoSitePlus" id="Q9H1A7"/>
<dbReference type="BioMuta" id="POLR2J3"/>
<dbReference type="jPOST" id="Q9H1A7"/>
<dbReference type="MassIVE" id="Q9H1A7"/>
<dbReference type="PaxDb" id="9606-ENSP00000483328"/>
<dbReference type="PeptideAtlas" id="Q9H1A7"/>
<dbReference type="ProteomicsDB" id="80386"/>
<dbReference type="Pumba" id="Q9H1A7"/>
<dbReference type="Ensembl" id="ENST00000379340.9">
    <property type="protein sequence ID" value="ENSP00000368645.5"/>
    <property type="gene ID" value="ENSG00000168255.20"/>
</dbReference>
<dbReference type="Ensembl" id="ENST00000508848.5">
    <property type="protein sequence ID" value="ENSP00000425877.1"/>
    <property type="gene ID" value="ENSG00000168255.20"/>
</dbReference>
<dbReference type="Ensembl" id="ENST00000608621.5">
    <property type="protein sequence ID" value="ENSP00000477228.1"/>
    <property type="gene ID" value="ENSG00000285437.2"/>
</dbReference>
<dbReference type="Ensembl" id="ENST00000621093.5">
    <property type="protein sequence ID" value="ENSP00000483328.1"/>
    <property type="gene ID" value="ENSG00000285437.2"/>
</dbReference>
<dbReference type="GeneID" id="548644"/>
<dbReference type="KEGG" id="hsa:548644"/>
<dbReference type="MANE-Select" id="ENST00000621093.5">
    <property type="protein sequence ID" value="ENSP00000483328.1"/>
    <property type="RefSeq nucleotide sequence ID" value="NM_001097615.3"/>
    <property type="RefSeq protein sequence ID" value="NP_001091084.2"/>
</dbReference>
<dbReference type="UCSC" id="uc011kkw.2">
    <property type="organism name" value="human"/>
</dbReference>
<dbReference type="AGR" id="HGNC:33853"/>
<dbReference type="CTD" id="548644"/>
<dbReference type="GeneCards" id="POLR2J3"/>
<dbReference type="HGNC" id="HGNC:33853">
    <property type="gene designation" value="POLR2J3"/>
</dbReference>
<dbReference type="neXtProt" id="NX_Q9H1A7"/>
<dbReference type="PharmGKB" id="PA164724678"/>
<dbReference type="VEuPathDB" id="HostDB:ENSG00000168255"/>
<dbReference type="eggNOG" id="KOG4392">
    <property type="taxonomic scope" value="Eukaryota"/>
</dbReference>
<dbReference type="GeneTree" id="ENSGT00550000074975"/>
<dbReference type="HOGENOM" id="CLU_090381_2_2_1"/>
<dbReference type="InParanoid" id="Q9H1A7"/>
<dbReference type="OrthoDB" id="10248581at2759"/>
<dbReference type="PAN-GO" id="Q9H1A7">
    <property type="GO annotations" value="2 GO annotations based on evolutionary models"/>
</dbReference>
<dbReference type="PathwayCommons" id="Q9H1A7"/>
<dbReference type="SignaLink" id="Q9H1A7"/>
<dbReference type="SIGNOR" id="Q9H1A7"/>
<dbReference type="ChiTaRS" id="POLR2J3">
    <property type="organism name" value="human"/>
</dbReference>
<dbReference type="Pharos" id="Q9H1A7">
    <property type="development level" value="Tdark"/>
</dbReference>
<dbReference type="PRO" id="PR:Q9H1A7"/>
<dbReference type="Proteomes" id="UP000005640">
    <property type="component" value="Chromosome 7"/>
</dbReference>
<dbReference type="RNAct" id="Q9H1A7">
    <property type="molecule type" value="protein"/>
</dbReference>
<dbReference type="Bgee" id="ENSG00000168255">
    <property type="expression patterns" value="Expressed in lower esophagus mucosa and 99 other cell types or tissues"/>
</dbReference>
<dbReference type="ExpressionAtlas" id="Q9H1A7">
    <property type="expression patterns" value="baseline and differential"/>
</dbReference>
<dbReference type="GO" id="GO:0005665">
    <property type="term" value="C:RNA polymerase II, core complex"/>
    <property type="evidence" value="ECO:0000318"/>
    <property type="project" value="GO_Central"/>
</dbReference>
<dbReference type="GO" id="GO:0003677">
    <property type="term" value="F:DNA binding"/>
    <property type="evidence" value="ECO:0007669"/>
    <property type="project" value="InterPro"/>
</dbReference>
<dbReference type="GO" id="GO:0003899">
    <property type="term" value="F:DNA-directed RNA polymerase activity"/>
    <property type="evidence" value="ECO:0007669"/>
    <property type="project" value="InterPro"/>
</dbReference>
<dbReference type="GO" id="GO:0046983">
    <property type="term" value="F:protein dimerization activity"/>
    <property type="evidence" value="ECO:0007669"/>
    <property type="project" value="InterPro"/>
</dbReference>
<dbReference type="GO" id="GO:0006366">
    <property type="term" value="P:transcription by RNA polymerase II"/>
    <property type="evidence" value="ECO:0000318"/>
    <property type="project" value="GO_Central"/>
</dbReference>
<dbReference type="CDD" id="cd06926">
    <property type="entry name" value="RNAP_II_RPB11"/>
    <property type="match status" value="1"/>
</dbReference>
<dbReference type="FunFam" id="3.30.1360.10:FF:000003">
    <property type="entry name" value="DNA-directed RNA polymerase II subunit RPB11"/>
    <property type="match status" value="1"/>
</dbReference>
<dbReference type="Gene3D" id="3.30.1360.10">
    <property type="entry name" value="RNA polymerase, RBP11-like subunit"/>
    <property type="match status" value="1"/>
</dbReference>
<dbReference type="HAMAP" id="MF_00261">
    <property type="entry name" value="RNApol_arch_Rpo11"/>
    <property type="match status" value="1"/>
</dbReference>
<dbReference type="InterPro" id="IPR037685">
    <property type="entry name" value="RBP11"/>
</dbReference>
<dbReference type="InterPro" id="IPR036603">
    <property type="entry name" value="RBP11-like"/>
</dbReference>
<dbReference type="InterPro" id="IPR009025">
    <property type="entry name" value="RBP11-like_dimer"/>
</dbReference>
<dbReference type="InterPro" id="IPR008193">
    <property type="entry name" value="RNA_pol_Rpb11_13-16kDa_CS"/>
</dbReference>
<dbReference type="InterPro" id="IPR022905">
    <property type="entry name" value="Rpo11-like"/>
</dbReference>
<dbReference type="PANTHER" id="PTHR13946">
    <property type="entry name" value="DNA-DIRECTED RNA POLYMERASE I,II,III"/>
    <property type="match status" value="1"/>
</dbReference>
<dbReference type="PANTHER" id="PTHR13946:SF16">
    <property type="entry name" value="DNA-DIRECTED RNA POLYMERASE II SUBUNIT RPB11"/>
    <property type="match status" value="1"/>
</dbReference>
<dbReference type="Pfam" id="PF13656">
    <property type="entry name" value="RNA_pol_L_2"/>
    <property type="match status" value="1"/>
</dbReference>
<dbReference type="SUPFAM" id="SSF55257">
    <property type="entry name" value="RBP11-like subunits of RNA polymerase"/>
    <property type="match status" value="1"/>
</dbReference>
<dbReference type="PROSITE" id="PS01154">
    <property type="entry name" value="RNA_POL_L_13KD"/>
    <property type="match status" value="1"/>
</dbReference>
<protein>
    <recommendedName>
        <fullName>DNA-directed RNA polymerase II subunit RPB11-b2</fullName>
        <shortName>RNA polymerase II subunit B11-b2</shortName>
        <shortName>RPB11b2</shortName>
    </recommendedName>
    <alternativeName>
        <fullName>DNA-directed RNA polymerase II subunit J3</fullName>
    </alternativeName>
</protein>
<feature type="chain" id="PRO_0000316947" description="DNA-directed RNA polymerase II subunit RPB11-b2">
    <location>
        <begin position="1"/>
        <end position="115"/>
    </location>
</feature>
<feature type="sequence conflict" description="In Ref. 1; CAC18331." evidence="2" ref="1">
    <original>I</original>
    <variation>M</variation>
    <location>
        <position position="34"/>
    </location>
</feature>